<name>THIG_VIBC3</name>
<protein>
    <recommendedName>
        <fullName evidence="1">Thiazole synthase</fullName>
        <ecNumber evidence="1">2.8.1.10</ecNumber>
    </recommendedName>
</protein>
<reference key="1">
    <citation type="submission" date="2007-03" db="EMBL/GenBank/DDBJ databases">
        <authorList>
            <person name="Heidelberg J."/>
        </authorList>
    </citation>
    <scope>NUCLEOTIDE SEQUENCE [LARGE SCALE GENOMIC DNA]</scope>
    <source>
        <strain>ATCC 39541 / Classical Ogawa 395 / O395</strain>
    </source>
</reference>
<reference key="2">
    <citation type="journal article" date="2008" name="PLoS ONE">
        <title>A recalibrated molecular clock and independent origins for the cholera pandemic clones.</title>
        <authorList>
            <person name="Feng L."/>
            <person name="Reeves P.R."/>
            <person name="Lan R."/>
            <person name="Ren Y."/>
            <person name="Gao C."/>
            <person name="Zhou Z."/>
            <person name="Ren Y."/>
            <person name="Cheng J."/>
            <person name="Wang W."/>
            <person name="Wang J."/>
            <person name="Qian W."/>
            <person name="Li D."/>
            <person name="Wang L."/>
        </authorList>
    </citation>
    <scope>NUCLEOTIDE SEQUENCE [LARGE SCALE GENOMIC DNA]</scope>
    <source>
        <strain>ATCC 39541 / Classical Ogawa 395 / O395</strain>
    </source>
</reference>
<organism>
    <name type="scientific">Vibrio cholerae serotype O1 (strain ATCC 39541 / Classical Ogawa 395 / O395)</name>
    <dbReference type="NCBI Taxonomy" id="345073"/>
    <lineage>
        <taxon>Bacteria</taxon>
        <taxon>Pseudomonadati</taxon>
        <taxon>Pseudomonadota</taxon>
        <taxon>Gammaproteobacteria</taxon>
        <taxon>Vibrionales</taxon>
        <taxon>Vibrionaceae</taxon>
        <taxon>Vibrio</taxon>
    </lineage>
</organism>
<feature type="chain" id="PRO_1000072337" description="Thiazole synthase">
    <location>
        <begin position="1"/>
        <end position="256"/>
    </location>
</feature>
<feature type="active site" description="Schiff-base intermediate with DXP" evidence="1">
    <location>
        <position position="95"/>
    </location>
</feature>
<feature type="binding site" evidence="1">
    <location>
        <position position="156"/>
    </location>
    <ligand>
        <name>1-deoxy-D-xylulose 5-phosphate</name>
        <dbReference type="ChEBI" id="CHEBI:57792"/>
    </ligand>
</feature>
<feature type="binding site" evidence="1">
    <location>
        <begin position="182"/>
        <end position="183"/>
    </location>
    <ligand>
        <name>1-deoxy-D-xylulose 5-phosphate</name>
        <dbReference type="ChEBI" id="CHEBI:57792"/>
    </ligand>
</feature>
<feature type="binding site" evidence="1">
    <location>
        <begin position="204"/>
        <end position="205"/>
    </location>
    <ligand>
        <name>1-deoxy-D-xylulose 5-phosphate</name>
        <dbReference type="ChEBI" id="CHEBI:57792"/>
    </ligand>
</feature>
<evidence type="ECO:0000255" key="1">
    <source>
        <dbReference type="HAMAP-Rule" id="MF_00443"/>
    </source>
</evidence>
<proteinExistence type="inferred from homology"/>
<sequence>MLKIADKTFQSRLFTGTGKFSNRHVMAEALAASGSELVTMALKRIDLAQRDDDILAPLLSMQMNLLPNTSGAKNAADAVYAAELAREALATNWLKLEIHPDPKYLMPDPIETLLAAEQLVKQGFIVLPYCHADPVLCKRLEEVGCAAVMPLGSPIGSNQGLASKTFLEIIIDQAKVPVIVDAGIGSPSDAAQAMELGADAVLVNTAIAAAHDPIAMAKAFKLAVEAGRMAYESGLPSRVKMATASSPLTGFLDFVS</sequence>
<dbReference type="EC" id="2.8.1.10" evidence="1"/>
<dbReference type="EMBL" id="CP000627">
    <property type="protein sequence ID" value="ABQ20016.1"/>
    <property type="molecule type" value="Genomic_DNA"/>
</dbReference>
<dbReference type="EMBL" id="CP001235">
    <property type="protein sequence ID" value="ACP08143.1"/>
    <property type="molecule type" value="Genomic_DNA"/>
</dbReference>
<dbReference type="RefSeq" id="WP_000912209.1">
    <property type="nucleotide sequence ID" value="NZ_JAACZH010000014.1"/>
</dbReference>
<dbReference type="SMR" id="A5F4E2"/>
<dbReference type="KEGG" id="vco:VC0395_A2449"/>
<dbReference type="KEGG" id="vcr:VC395_0115"/>
<dbReference type="PATRIC" id="fig|345073.21.peg.106"/>
<dbReference type="eggNOG" id="COG2022">
    <property type="taxonomic scope" value="Bacteria"/>
</dbReference>
<dbReference type="HOGENOM" id="CLU_062233_1_0_6"/>
<dbReference type="OrthoDB" id="9805935at2"/>
<dbReference type="UniPathway" id="UPA00060"/>
<dbReference type="Proteomes" id="UP000000249">
    <property type="component" value="Chromosome 2"/>
</dbReference>
<dbReference type="GO" id="GO:0005737">
    <property type="term" value="C:cytoplasm"/>
    <property type="evidence" value="ECO:0007669"/>
    <property type="project" value="UniProtKB-SubCell"/>
</dbReference>
<dbReference type="GO" id="GO:1990107">
    <property type="term" value="F:thiazole synthase activity"/>
    <property type="evidence" value="ECO:0007669"/>
    <property type="project" value="UniProtKB-EC"/>
</dbReference>
<dbReference type="GO" id="GO:0009229">
    <property type="term" value="P:thiamine diphosphate biosynthetic process"/>
    <property type="evidence" value="ECO:0007669"/>
    <property type="project" value="UniProtKB-UniRule"/>
</dbReference>
<dbReference type="CDD" id="cd04728">
    <property type="entry name" value="ThiG"/>
    <property type="match status" value="1"/>
</dbReference>
<dbReference type="FunFam" id="3.20.20.70:FF:000049">
    <property type="entry name" value="Thiazole synthase"/>
    <property type="match status" value="1"/>
</dbReference>
<dbReference type="Gene3D" id="3.20.20.70">
    <property type="entry name" value="Aldolase class I"/>
    <property type="match status" value="1"/>
</dbReference>
<dbReference type="HAMAP" id="MF_00443">
    <property type="entry name" value="ThiG"/>
    <property type="match status" value="1"/>
</dbReference>
<dbReference type="InterPro" id="IPR013785">
    <property type="entry name" value="Aldolase_TIM"/>
</dbReference>
<dbReference type="InterPro" id="IPR033983">
    <property type="entry name" value="Thiazole_synthase_ThiG"/>
</dbReference>
<dbReference type="InterPro" id="IPR008867">
    <property type="entry name" value="ThiG"/>
</dbReference>
<dbReference type="PANTHER" id="PTHR34266">
    <property type="entry name" value="THIAZOLE SYNTHASE"/>
    <property type="match status" value="1"/>
</dbReference>
<dbReference type="PANTHER" id="PTHR34266:SF2">
    <property type="entry name" value="THIAZOLE SYNTHASE"/>
    <property type="match status" value="1"/>
</dbReference>
<dbReference type="Pfam" id="PF05690">
    <property type="entry name" value="ThiG"/>
    <property type="match status" value="1"/>
</dbReference>
<dbReference type="SUPFAM" id="SSF110399">
    <property type="entry name" value="ThiG-like"/>
    <property type="match status" value="1"/>
</dbReference>
<gene>
    <name evidence="1" type="primary">thiG</name>
    <name type="ordered locus">VC0395_A2449</name>
    <name type="ordered locus">VC395_0115</name>
</gene>
<keyword id="KW-0963">Cytoplasm</keyword>
<keyword id="KW-0704">Schiff base</keyword>
<keyword id="KW-0784">Thiamine biosynthesis</keyword>
<keyword id="KW-0808">Transferase</keyword>
<comment type="function">
    <text evidence="1">Catalyzes the rearrangement of 1-deoxy-D-xylulose 5-phosphate (DXP) to produce the thiazole phosphate moiety of thiamine. Sulfur is provided by the thiocarboxylate moiety of the carrier protein ThiS. In vitro, sulfur can be provided by H(2)S.</text>
</comment>
<comment type="catalytic activity">
    <reaction evidence="1">
        <text>[ThiS sulfur-carrier protein]-C-terminal-Gly-aminoethanethioate + 2-iminoacetate + 1-deoxy-D-xylulose 5-phosphate = [ThiS sulfur-carrier protein]-C-terminal Gly-Gly + 2-[(2R,5Z)-2-carboxy-4-methylthiazol-5(2H)-ylidene]ethyl phosphate + 2 H2O + H(+)</text>
        <dbReference type="Rhea" id="RHEA:26297"/>
        <dbReference type="Rhea" id="RHEA-COMP:12909"/>
        <dbReference type="Rhea" id="RHEA-COMP:19908"/>
        <dbReference type="ChEBI" id="CHEBI:15377"/>
        <dbReference type="ChEBI" id="CHEBI:15378"/>
        <dbReference type="ChEBI" id="CHEBI:57792"/>
        <dbReference type="ChEBI" id="CHEBI:62899"/>
        <dbReference type="ChEBI" id="CHEBI:77846"/>
        <dbReference type="ChEBI" id="CHEBI:90778"/>
        <dbReference type="ChEBI" id="CHEBI:232372"/>
        <dbReference type="EC" id="2.8.1.10"/>
    </reaction>
</comment>
<comment type="pathway">
    <text evidence="1">Cofactor biosynthesis; thiamine diphosphate biosynthesis.</text>
</comment>
<comment type="subunit">
    <text evidence="1">Homotetramer. Forms heterodimers with either ThiH or ThiS.</text>
</comment>
<comment type="subcellular location">
    <subcellularLocation>
        <location evidence="1">Cytoplasm</location>
    </subcellularLocation>
</comment>
<comment type="similarity">
    <text evidence="1">Belongs to the ThiG family.</text>
</comment>
<accession>A5F4E2</accession>
<accession>C3M2H9</accession>